<name>LEPA_LIMRD</name>
<dbReference type="EC" id="3.6.5.n1" evidence="1"/>
<dbReference type="EMBL" id="CP000705">
    <property type="protein sequence ID" value="ABQ82973.1"/>
    <property type="molecule type" value="Genomic_DNA"/>
</dbReference>
<dbReference type="RefSeq" id="WP_003668167.1">
    <property type="nucleotide sequence ID" value="NC_009513.1"/>
</dbReference>
<dbReference type="SMR" id="A5VJE9"/>
<dbReference type="STRING" id="557436.Lreu_0708"/>
<dbReference type="KEGG" id="lre:Lreu_0708"/>
<dbReference type="PATRIC" id="fig|557436.17.peg.547"/>
<dbReference type="eggNOG" id="COG0481">
    <property type="taxonomic scope" value="Bacteria"/>
</dbReference>
<dbReference type="HOGENOM" id="CLU_009995_3_3_9"/>
<dbReference type="Proteomes" id="UP000001991">
    <property type="component" value="Chromosome"/>
</dbReference>
<dbReference type="GO" id="GO:0005886">
    <property type="term" value="C:plasma membrane"/>
    <property type="evidence" value="ECO:0007669"/>
    <property type="project" value="UniProtKB-SubCell"/>
</dbReference>
<dbReference type="GO" id="GO:0005525">
    <property type="term" value="F:GTP binding"/>
    <property type="evidence" value="ECO:0007669"/>
    <property type="project" value="UniProtKB-UniRule"/>
</dbReference>
<dbReference type="GO" id="GO:0003924">
    <property type="term" value="F:GTPase activity"/>
    <property type="evidence" value="ECO:0007669"/>
    <property type="project" value="UniProtKB-UniRule"/>
</dbReference>
<dbReference type="GO" id="GO:0043022">
    <property type="term" value="F:ribosome binding"/>
    <property type="evidence" value="ECO:0007669"/>
    <property type="project" value="UniProtKB-UniRule"/>
</dbReference>
<dbReference type="GO" id="GO:0003746">
    <property type="term" value="F:translation elongation factor activity"/>
    <property type="evidence" value="ECO:0007669"/>
    <property type="project" value="UniProtKB-UniRule"/>
</dbReference>
<dbReference type="GO" id="GO:0045727">
    <property type="term" value="P:positive regulation of translation"/>
    <property type="evidence" value="ECO:0007669"/>
    <property type="project" value="UniProtKB-UniRule"/>
</dbReference>
<dbReference type="CDD" id="cd03699">
    <property type="entry name" value="EF4_II"/>
    <property type="match status" value="1"/>
</dbReference>
<dbReference type="CDD" id="cd16260">
    <property type="entry name" value="EF4_III"/>
    <property type="match status" value="1"/>
</dbReference>
<dbReference type="CDD" id="cd01890">
    <property type="entry name" value="LepA"/>
    <property type="match status" value="1"/>
</dbReference>
<dbReference type="CDD" id="cd03709">
    <property type="entry name" value="lepA_C"/>
    <property type="match status" value="1"/>
</dbReference>
<dbReference type="FunFam" id="3.40.50.300:FF:000078">
    <property type="entry name" value="Elongation factor 4"/>
    <property type="match status" value="1"/>
</dbReference>
<dbReference type="FunFam" id="2.40.30.10:FF:000015">
    <property type="entry name" value="Translation factor GUF1, mitochondrial"/>
    <property type="match status" value="1"/>
</dbReference>
<dbReference type="FunFam" id="3.30.70.240:FF:000007">
    <property type="entry name" value="Translation factor GUF1, mitochondrial"/>
    <property type="match status" value="1"/>
</dbReference>
<dbReference type="FunFam" id="3.30.70.2570:FF:000001">
    <property type="entry name" value="Translation factor GUF1, mitochondrial"/>
    <property type="match status" value="1"/>
</dbReference>
<dbReference type="FunFam" id="3.30.70.870:FF:000004">
    <property type="entry name" value="Translation factor GUF1, mitochondrial"/>
    <property type="match status" value="1"/>
</dbReference>
<dbReference type="Gene3D" id="3.30.70.240">
    <property type="match status" value="1"/>
</dbReference>
<dbReference type="Gene3D" id="3.30.70.2570">
    <property type="entry name" value="Elongation factor 4, C-terminal domain"/>
    <property type="match status" value="1"/>
</dbReference>
<dbReference type="Gene3D" id="3.30.70.870">
    <property type="entry name" value="Elongation Factor G (Translational Gtpase), domain 3"/>
    <property type="match status" value="1"/>
</dbReference>
<dbReference type="Gene3D" id="3.40.50.300">
    <property type="entry name" value="P-loop containing nucleotide triphosphate hydrolases"/>
    <property type="match status" value="1"/>
</dbReference>
<dbReference type="Gene3D" id="2.40.30.10">
    <property type="entry name" value="Translation factors"/>
    <property type="match status" value="1"/>
</dbReference>
<dbReference type="HAMAP" id="MF_00071">
    <property type="entry name" value="LepA"/>
    <property type="match status" value="1"/>
</dbReference>
<dbReference type="InterPro" id="IPR006297">
    <property type="entry name" value="EF-4"/>
</dbReference>
<dbReference type="InterPro" id="IPR035647">
    <property type="entry name" value="EFG_III/V"/>
</dbReference>
<dbReference type="InterPro" id="IPR000640">
    <property type="entry name" value="EFG_V-like"/>
</dbReference>
<dbReference type="InterPro" id="IPR004161">
    <property type="entry name" value="EFTu-like_2"/>
</dbReference>
<dbReference type="InterPro" id="IPR038363">
    <property type="entry name" value="LepA_C_sf"/>
</dbReference>
<dbReference type="InterPro" id="IPR013842">
    <property type="entry name" value="LepA_CTD"/>
</dbReference>
<dbReference type="InterPro" id="IPR035654">
    <property type="entry name" value="LepA_IV"/>
</dbReference>
<dbReference type="InterPro" id="IPR027417">
    <property type="entry name" value="P-loop_NTPase"/>
</dbReference>
<dbReference type="InterPro" id="IPR005225">
    <property type="entry name" value="Small_GTP-bd"/>
</dbReference>
<dbReference type="InterPro" id="IPR000795">
    <property type="entry name" value="T_Tr_GTP-bd_dom"/>
</dbReference>
<dbReference type="NCBIfam" id="TIGR01393">
    <property type="entry name" value="lepA"/>
    <property type="match status" value="1"/>
</dbReference>
<dbReference type="NCBIfam" id="TIGR00231">
    <property type="entry name" value="small_GTP"/>
    <property type="match status" value="1"/>
</dbReference>
<dbReference type="PANTHER" id="PTHR43512:SF4">
    <property type="entry name" value="TRANSLATION FACTOR GUF1 HOMOLOG, CHLOROPLASTIC"/>
    <property type="match status" value="1"/>
</dbReference>
<dbReference type="PANTHER" id="PTHR43512">
    <property type="entry name" value="TRANSLATION FACTOR GUF1-RELATED"/>
    <property type="match status" value="1"/>
</dbReference>
<dbReference type="Pfam" id="PF00679">
    <property type="entry name" value="EFG_C"/>
    <property type="match status" value="1"/>
</dbReference>
<dbReference type="Pfam" id="PF00009">
    <property type="entry name" value="GTP_EFTU"/>
    <property type="match status" value="1"/>
</dbReference>
<dbReference type="Pfam" id="PF03144">
    <property type="entry name" value="GTP_EFTU_D2"/>
    <property type="match status" value="1"/>
</dbReference>
<dbReference type="Pfam" id="PF06421">
    <property type="entry name" value="LepA_C"/>
    <property type="match status" value="1"/>
</dbReference>
<dbReference type="PRINTS" id="PR00315">
    <property type="entry name" value="ELONGATNFCT"/>
</dbReference>
<dbReference type="SMART" id="SM00838">
    <property type="entry name" value="EFG_C"/>
    <property type="match status" value="1"/>
</dbReference>
<dbReference type="SUPFAM" id="SSF54980">
    <property type="entry name" value="EF-G C-terminal domain-like"/>
    <property type="match status" value="2"/>
</dbReference>
<dbReference type="SUPFAM" id="SSF52540">
    <property type="entry name" value="P-loop containing nucleoside triphosphate hydrolases"/>
    <property type="match status" value="1"/>
</dbReference>
<dbReference type="PROSITE" id="PS51722">
    <property type="entry name" value="G_TR_2"/>
    <property type="match status" value="1"/>
</dbReference>
<accession>A5VJE9</accession>
<reference key="1">
    <citation type="journal article" date="2011" name="PLoS Genet.">
        <title>The evolution of host specialization in the vertebrate gut symbiont Lactobacillus reuteri.</title>
        <authorList>
            <person name="Frese S.A."/>
            <person name="Benson A.K."/>
            <person name="Tannock G.W."/>
            <person name="Loach D.M."/>
            <person name="Kim J."/>
            <person name="Zhang M."/>
            <person name="Oh P.L."/>
            <person name="Heng N.C."/>
            <person name="Patil P.B."/>
            <person name="Juge N."/>
            <person name="Mackenzie D.A."/>
            <person name="Pearson B.M."/>
            <person name="Lapidus A."/>
            <person name="Dalin E."/>
            <person name="Tice H."/>
            <person name="Goltsman E."/>
            <person name="Land M."/>
            <person name="Hauser L."/>
            <person name="Ivanova N."/>
            <person name="Kyrpides N.C."/>
            <person name="Walter J."/>
        </authorList>
    </citation>
    <scope>NUCLEOTIDE SEQUENCE [LARGE SCALE GENOMIC DNA]</scope>
    <source>
        <strain>DSM 20016</strain>
    </source>
</reference>
<proteinExistence type="inferred from homology"/>
<feature type="chain" id="PRO_1000057475" description="Elongation factor 4">
    <location>
        <begin position="1"/>
        <end position="611"/>
    </location>
</feature>
<feature type="domain" description="tr-type G">
    <location>
        <begin position="11"/>
        <end position="193"/>
    </location>
</feature>
<feature type="binding site" evidence="1">
    <location>
        <begin position="23"/>
        <end position="28"/>
    </location>
    <ligand>
        <name>GTP</name>
        <dbReference type="ChEBI" id="CHEBI:37565"/>
    </ligand>
</feature>
<feature type="binding site" evidence="1">
    <location>
        <begin position="140"/>
        <end position="143"/>
    </location>
    <ligand>
        <name>GTP</name>
        <dbReference type="ChEBI" id="CHEBI:37565"/>
    </ligand>
</feature>
<comment type="function">
    <text evidence="1">Required for accurate and efficient protein synthesis under certain stress conditions. May act as a fidelity factor of the translation reaction, by catalyzing a one-codon backward translocation of tRNAs on improperly translocated ribosomes. Back-translocation proceeds from a post-translocation (POST) complex to a pre-translocation (PRE) complex, thus giving elongation factor G a second chance to translocate the tRNAs correctly. Binds to ribosomes in a GTP-dependent manner.</text>
</comment>
<comment type="catalytic activity">
    <reaction evidence="1">
        <text>GTP + H2O = GDP + phosphate + H(+)</text>
        <dbReference type="Rhea" id="RHEA:19669"/>
        <dbReference type="ChEBI" id="CHEBI:15377"/>
        <dbReference type="ChEBI" id="CHEBI:15378"/>
        <dbReference type="ChEBI" id="CHEBI:37565"/>
        <dbReference type="ChEBI" id="CHEBI:43474"/>
        <dbReference type="ChEBI" id="CHEBI:58189"/>
        <dbReference type="EC" id="3.6.5.n1"/>
    </reaction>
</comment>
<comment type="subcellular location">
    <subcellularLocation>
        <location evidence="1">Cell membrane</location>
        <topology evidence="1">Peripheral membrane protein</topology>
        <orientation evidence="1">Cytoplasmic side</orientation>
    </subcellularLocation>
</comment>
<comment type="similarity">
    <text evidence="1">Belongs to the TRAFAC class translation factor GTPase superfamily. Classic translation factor GTPase family. LepA subfamily.</text>
</comment>
<protein>
    <recommendedName>
        <fullName evidence="1">Elongation factor 4</fullName>
        <shortName evidence="1">EF-4</shortName>
        <ecNumber evidence="1">3.6.5.n1</ecNumber>
    </recommendedName>
    <alternativeName>
        <fullName evidence="1">Ribosomal back-translocase LepA</fullName>
    </alternativeName>
</protein>
<keyword id="KW-1003">Cell membrane</keyword>
<keyword id="KW-0342">GTP-binding</keyword>
<keyword id="KW-0378">Hydrolase</keyword>
<keyword id="KW-0472">Membrane</keyword>
<keyword id="KW-0547">Nucleotide-binding</keyword>
<keyword id="KW-0648">Protein biosynthesis</keyword>
<keyword id="KW-1185">Reference proteome</keyword>
<gene>
    <name evidence="1" type="primary">lepA</name>
    <name type="ordered locus">Lreu_0708</name>
</gene>
<organism>
    <name type="scientific">Limosilactobacillus reuteri (strain DSM 20016)</name>
    <name type="common">Lactobacillus reuteri</name>
    <dbReference type="NCBI Taxonomy" id="557436"/>
    <lineage>
        <taxon>Bacteria</taxon>
        <taxon>Bacillati</taxon>
        <taxon>Bacillota</taxon>
        <taxon>Bacilli</taxon>
        <taxon>Lactobacillales</taxon>
        <taxon>Lactobacillaceae</taxon>
        <taxon>Limosilactobacillus</taxon>
    </lineage>
</organism>
<sequence length="611" mass="68064">MNLEEMKERQKHIRNFSIVAHIDHGKSTLADRILEMTDSISKREMKNQILDDMPLERERGITIKLNAVALTYHAKDGEDYIFHLIDTPGHVDFSYEVSRSLAACEGAVLVVDATQGVEAQTLANVFLALDNDLEILPVINKIDLPSADPEGTKKQIEDEIGLDPDEAVDISAKTGMGVDEVLEKIVKDVPAPTGDLTAPLKALIFDSKYDDYRGVVLSVRVVEGTVKKGDRIKLMNGGTEYEVAEVGINSPKPLARDVLMAGDVGYITAAIKDIKDTRVGDTVTSADNPTDKPLEGYRQMTPMVYAGLYPTDNAKFNDLRDALEKLQLNDAALTFEPESSQALGFGFRCGFLGLLHMDVIQERLEREFNLDLITTAPSVTYHVELADGTTKEVENPAEMPDASSIKAIKEPYVRASIMVPNDYVGPVMELCQRKRGDFDTMEYLSDTRVNVIYHIPLSEIIFDFFDKLKSSTRGYASLDYEIDGYRPSNLVKIDILLNGDKVDALSFIAHRDFAAERGREITAKLKKIIPRQNFEIPIQAAIGSKIIARTNIKAYRKDVTARIHTGDPDRRAKLLDKQKRGKKRMKAVGKVDIPQAAFMAVLKTDEQLDEK</sequence>
<evidence type="ECO:0000255" key="1">
    <source>
        <dbReference type="HAMAP-Rule" id="MF_00071"/>
    </source>
</evidence>